<name>LMTD1_MOUSE</name>
<keyword id="KW-0403">Intermediate filament</keyword>
<keyword id="KW-1185">Reference proteome</keyword>
<accession>Q9D4C1</accession>
<accession>Q5UE52</accession>
<dbReference type="EMBL" id="AY753326">
    <property type="protein sequence ID" value="AAV31718.1"/>
    <property type="molecule type" value="mRNA"/>
</dbReference>
<dbReference type="EMBL" id="AK016641">
    <property type="protein sequence ID" value="BAB30353.1"/>
    <property type="molecule type" value="mRNA"/>
</dbReference>
<dbReference type="EMBL" id="BC053420">
    <property type="protein sequence ID" value="AAH53420.1"/>
    <property type="molecule type" value="mRNA"/>
</dbReference>
<dbReference type="CCDS" id="CCDS20695.1"/>
<dbReference type="RefSeq" id="NP_001404737.1">
    <property type="nucleotide sequence ID" value="NM_001417808.1"/>
</dbReference>
<dbReference type="RefSeq" id="NP_083018.1">
    <property type="nucleotide sequence ID" value="NM_028742.3"/>
</dbReference>
<dbReference type="RefSeq" id="XP_017177272.1">
    <property type="nucleotide sequence ID" value="XM_017321783.1"/>
</dbReference>
<dbReference type="RefSeq" id="XP_017177273.1">
    <property type="nucleotide sequence ID" value="XM_017321784.1"/>
</dbReference>
<dbReference type="RefSeq" id="XP_017177274.1">
    <property type="nucleotide sequence ID" value="XM_017321785.3"/>
</dbReference>
<dbReference type="RefSeq" id="XP_017177275.1">
    <property type="nucleotide sequence ID" value="XM_017321786.1"/>
</dbReference>
<dbReference type="RefSeq" id="XP_017177276.1">
    <property type="nucleotide sequence ID" value="XM_017321787.1"/>
</dbReference>
<dbReference type="RefSeq" id="XP_017177277.1">
    <property type="nucleotide sequence ID" value="XM_017321788.3"/>
</dbReference>
<dbReference type="SMR" id="Q9D4C1"/>
<dbReference type="FunCoup" id="Q9D4C1">
    <property type="interactions" value="460"/>
</dbReference>
<dbReference type="STRING" id="10090.ENSMUSP00000107337"/>
<dbReference type="PhosphoSitePlus" id="Q9D4C1"/>
<dbReference type="PaxDb" id="10090-ENSMUSP00000107337"/>
<dbReference type="ProteomicsDB" id="292343"/>
<dbReference type="Antibodypedia" id="42350">
    <property type="antibodies" value="107 antibodies from 21 providers"/>
</dbReference>
<dbReference type="DNASU" id="74071"/>
<dbReference type="Ensembl" id="ENSMUST00000111708.9">
    <property type="protein sequence ID" value="ENSMUSP00000107337.3"/>
    <property type="gene ID" value="ENSMUSG00000054966.14"/>
</dbReference>
<dbReference type="GeneID" id="74071"/>
<dbReference type="KEGG" id="mmu:74071"/>
<dbReference type="UCSC" id="uc009ero.1">
    <property type="organism name" value="mouse"/>
</dbReference>
<dbReference type="AGR" id="MGI:1921321"/>
<dbReference type="CTD" id="160492"/>
<dbReference type="MGI" id="MGI:1921321">
    <property type="gene designation" value="Lmntd1"/>
</dbReference>
<dbReference type="VEuPathDB" id="HostDB:ENSMUSG00000054966"/>
<dbReference type="eggNOG" id="KOG0977">
    <property type="taxonomic scope" value="Eukaryota"/>
</dbReference>
<dbReference type="GeneTree" id="ENSGT00910000144343"/>
<dbReference type="InParanoid" id="Q9D4C1"/>
<dbReference type="OMA" id="PTSRRHM"/>
<dbReference type="OrthoDB" id="102442at2759"/>
<dbReference type="PhylomeDB" id="Q9D4C1"/>
<dbReference type="TreeFam" id="TF338357"/>
<dbReference type="BioGRID-ORCS" id="74071">
    <property type="hits" value="2 hits in 76 CRISPR screens"/>
</dbReference>
<dbReference type="ChiTaRS" id="Lmntd1">
    <property type="organism name" value="mouse"/>
</dbReference>
<dbReference type="PRO" id="PR:Q9D4C1"/>
<dbReference type="Proteomes" id="UP000000589">
    <property type="component" value="Chromosome 6"/>
</dbReference>
<dbReference type="RNAct" id="Q9D4C1">
    <property type="molecule type" value="protein"/>
</dbReference>
<dbReference type="Bgee" id="ENSMUSG00000054966">
    <property type="expression patterns" value="Expressed in interventricular septum and 44 other cell types or tissues"/>
</dbReference>
<dbReference type="ExpressionAtlas" id="Q9D4C1">
    <property type="expression patterns" value="baseline and differential"/>
</dbReference>
<dbReference type="GO" id="GO:0005737">
    <property type="term" value="C:cytoplasm"/>
    <property type="evidence" value="ECO:0000314"/>
    <property type="project" value="MGI"/>
</dbReference>
<dbReference type="GO" id="GO:0005882">
    <property type="term" value="C:intermediate filament"/>
    <property type="evidence" value="ECO:0007669"/>
    <property type="project" value="UniProtKB-KW"/>
</dbReference>
<dbReference type="GO" id="GO:0005635">
    <property type="term" value="C:nuclear envelope"/>
    <property type="evidence" value="ECO:0000314"/>
    <property type="project" value="MGI"/>
</dbReference>
<dbReference type="GO" id="GO:0005634">
    <property type="term" value="C:nucleus"/>
    <property type="evidence" value="ECO:0000314"/>
    <property type="project" value="MGI"/>
</dbReference>
<dbReference type="GO" id="GO:0008283">
    <property type="term" value="P:cell population proliferation"/>
    <property type="evidence" value="ECO:0000314"/>
    <property type="project" value="MGI"/>
</dbReference>
<dbReference type="Gene3D" id="2.60.40.1260">
    <property type="entry name" value="Lamin Tail domain"/>
    <property type="match status" value="1"/>
</dbReference>
<dbReference type="InterPro" id="IPR001322">
    <property type="entry name" value="Lamin_tail_dom"/>
</dbReference>
<dbReference type="InterPro" id="IPR036415">
    <property type="entry name" value="Lamin_tail_dom_sf"/>
</dbReference>
<dbReference type="InterPro" id="IPR042840">
    <property type="entry name" value="LMNTD1"/>
</dbReference>
<dbReference type="PANTHER" id="PTHR47012">
    <property type="entry name" value="LAMIN TAIL DOMAIN-CONTAINING PROTEIN 1"/>
    <property type="match status" value="1"/>
</dbReference>
<dbReference type="PANTHER" id="PTHR47012:SF1">
    <property type="entry name" value="LAMIN TAIL DOMAIN-CONTAINING PROTEIN 1"/>
    <property type="match status" value="1"/>
</dbReference>
<dbReference type="Pfam" id="PF00932">
    <property type="entry name" value="LTD"/>
    <property type="match status" value="1"/>
</dbReference>
<dbReference type="SUPFAM" id="SSF74853">
    <property type="entry name" value="Lamin A/C globular tail domain"/>
    <property type="match status" value="1"/>
</dbReference>
<dbReference type="PROSITE" id="PS51841">
    <property type="entry name" value="LTD"/>
    <property type="match status" value="1"/>
</dbReference>
<comment type="similarity">
    <text evidence="3">Belongs to the intermediate filament family.</text>
</comment>
<proteinExistence type="evidence at transcript level"/>
<sequence length="413" mass="45937">MMKEASEPLASVTSINKQDSKVQDGEIRKEKIGTITPSKQHSSVHFFPKIMDSDSTTLIPLSRSFSQEMPIGFYQITSTQNSSTLSSRGQLASKSTILSCSHKDSSLGKQSTSSMVPRRQPQSSSDVDTYTFGNGEDYFLSLFGESKKLTAHTPQAENVSEHLSVILEEVGQFTSSSLGEIKIAEVNIKGLFVRLVNSSNEKEVEIGNHILQQNVNGHAVSLYQFPDNITLQANSTVTVWAAASEAKPQPPTDFVWEEQSKFRSSPDCTTILCKPNGEAIAWYTPIHWKQAWEKLETDIEFERCSVVVPSMRNHMFGWITASVSSTNEEKEEPIQKTPSQVYPVLYREKEIPPTVLPNKSPWCRNPNTSPHPYSSLIDSHDSDISESSLDTQLKPQPTKPKPDPGTKKKKAKS</sequence>
<feature type="chain" id="PRO_0000317249" description="Lamin tail domain-containing protein 1">
    <location>
        <begin position="1"/>
        <end position="413"/>
    </location>
</feature>
<feature type="domain" description="LTD" evidence="1">
    <location>
        <begin position="169"/>
        <end position="287"/>
    </location>
</feature>
<feature type="region of interest" description="Disordered" evidence="2">
    <location>
        <begin position="1"/>
        <end position="25"/>
    </location>
</feature>
<feature type="region of interest" description="Disordered" evidence="2">
    <location>
        <begin position="102"/>
        <end position="128"/>
    </location>
</feature>
<feature type="region of interest" description="Disordered" evidence="2">
    <location>
        <begin position="356"/>
        <end position="413"/>
    </location>
</feature>
<feature type="compositionally biased region" description="Polar residues" evidence="2">
    <location>
        <begin position="107"/>
        <end position="128"/>
    </location>
</feature>
<feature type="compositionally biased region" description="Low complexity" evidence="2">
    <location>
        <begin position="385"/>
        <end position="396"/>
    </location>
</feature>
<feature type="sequence conflict" description="In Ref. 1; AAV31718." evidence="3" ref="1">
    <original>H</original>
    <variation>R</variation>
    <location>
        <position position="218"/>
    </location>
</feature>
<feature type="sequence conflict" description="In Ref. 1; AAV31718." evidence="3" ref="1">
    <original>E</original>
    <variation>G</variation>
    <location>
        <position position="258"/>
    </location>
</feature>
<evidence type="ECO:0000255" key="1">
    <source>
        <dbReference type="PROSITE-ProRule" id="PRU01187"/>
    </source>
</evidence>
<evidence type="ECO:0000256" key="2">
    <source>
        <dbReference type="SAM" id="MobiDB-lite"/>
    </source>
</evidence>
<evidence type="ECO:0000305" key="3"/>
<reference key="1">
    <citation type="submission" date="2004-09" db="EMBL/GenBank/DDBJ databases">
        <title>Complex in vitro allelic effects of mouse Pas1 candidate genes in human lung cancer cell lines.</title>
        <authorList>
            <person name="Manenti G."/>
            <person name="Galbiati F."/>
            <person name="Pettinicchio A."/>
            <person name="Dragani T.A."/>
        </authorList>
    </citation>
    <scope>NUCLEOTIDE SEQUENCE [MRNA]</scope>
    <source>
        <strain>A/J</strain>
        <tissue>Lung</tissue>
    </source>
</reference>
<reference key="2">
    <citation type="journal article" date="2005" name="Science">
        <title>The transcriptional landscape of the mammalian genome.</title>
        <authorList>
            <person name="Carninci P."/>
            <person name="Kasukawa T."/>
            <person name="Katayama S."/>
            <person name="Gough J."/>
            <person name="Frith M.C."/>
            <person name="Maeda N."/>
            <person name="Oyama R."/>
            <person name="Ravasi T."/>
            <person name="Lenhard B."/>
            <person name="Wells C."/>
            <person name="Kodzius R."/>
            <person name="Shimokawa K."/>
            <person name="Bajic V.B."/>
            <person name="Brenner S.E."/>
            <person name="Batalov S."/>
            <person name="Forrest A.R."/>
            <person name="Zavolan M."/>
            <person name="Davis M.J."/>
            <person name="Wilming L.G."/>
            <person name="Aidinis V."/>
            <person name="Allen J.E."/>
            <person name="Ambesi-Impiombato A."/>
            <person name="Apweiler R."/>
            <person name="Aturaliya R.N."/>
            <person name="Bailey T.L."/>
            <person name="Bansal M."/>
            <person name="Baxter L."/>
            <person name="Beisel K.W."/>
            <person name="Bersano T."/>
            <person name="Bono H."/>
            <person name="Chalk A.M."/>
            <person name="Chiu K.P."/>
            <person name="Choudhary V."/>
            <person name="Christoffels A."/>
            <person name="Clutterbuck D.R."/>
            <person name="Crowe M.L."/>
            <person name="Dalla E."/>
            <person name="Dalrymple B.P."/>
            <person name="de Bono B."/>
            <person name="Della Gatta G."/>
            <person name="di Bernardo D."/>
            <person name="Down T."/>
            <person name="Engstrom P."/>
            <person name="Fagiolini M."/>
            <person name="Faulkner G."/>
            <person name="Fletcher C.F."/>
            <person name="Fukushima T."/>
            <person name="Furuno M."/>
            <person name="Futaki S."/>
            <person name="Gariboldi M."/>
            <person name="Georgii-Hemming P."/>
            <person name="Gingeras T.R."/>
            <person name="Gojobori T."/>
            <person name="Green R.E."/>
            <person name="Gustincich S."/>
            <person name="Harbers M."/>
            <person name="Hayashi Y."/>
            <person name="Hensch T.K."/>
            <person name="Hirokawa N."/>
            <person name="Hill D."/>
            <person name="Huminiecki L."/>
            <person name="Iacono M."/>
            <person name="Ikeo K."/>
            <person name="Iwama A."/>
            <person name="Ishikawa T."/>
            <person name="Jakt M."/>
            <person name="Kanapin A."/>
            <person name="Katoh M."/>
            <person name="Kawasawa Y."/>
            <person name="Kelso J."/>
            <person name="Kitamura H."/>
            <person name="Kitano H."/>
            <person name="Kollias G."/>
            <person name="Krishnan S.P."/>
            <person name="Kruger A."/>
            <person name="Kummerfeld S.K."/>
            <person name="Kurochkin I.V."/>
            <person name="Lareau L.F."/>
            <person name="Lazarevic D."/>
            <person name="Lipovich L."/>
            <person name="Liu J."/>
            <person name="Liuni S."/>
            <person name="McWilliam S."/>
            <person name="Madan Babu M."/>
            <person name="Madera M."/>
            <person name="Marchionni L."/>
            <person name="Matsuda H."/>
            <person name="Matsuzawa S."/>
            <person name="Miki H."/>
            <person name="Mignone F."/>
            <person name="Miyake S."/>
            <person name="Morris K."/>
            <person name="Mottagui-Tabar S."/>
            <person name="Mulder N."/>
            <person name="Nakano N."/>
            <person name="Nakauchi H."/>
            <person name="Ng P."/>
            <person name="Nilsson R."/>
            <person name="Nishiguchi S."/>
            <person name="Nishikawa S."/>
            <person name="Nori F."/>
            <person name="Ohara O."/>
            <person name="Okazaki Y."/>
            <person name="Orlando V."/>
            <person name="Pang K.C."/>
            <person name="Pavan W.J."/>
            <person name="Pavesi G."/>
            <person name="Pesole G."/>
            <person name="Petrovsky N."/>
            <person name="Piazza S."/>
            <person name="Reed J."/>
            <person name="Reid J.F."/>
            <person name="Ring B.Z."/>
            <person name="Ringwald M."/>
            <person name="Rost B."/>
            <person name="Ruan Y."/>
            <person name="Salzberg S.L."/>
            <person name="Sandelin A."/>
            <person name="Schneider C."/>
            <person name="Schoenbach C."/>
            <person name="Sekiguchi K."/>
            <person name="Semple C.A."/>
            <person name="Seno S."/>
            <person name="Sessa L."/>
            <person name="Sheng Y."/>
            <person name="Shibata Y."/>
            <person name="Shimada H."/>
            <person name="Shimada K."/>
            <person name="Silva D."/>
            <person name="Sinclair B."/>
            <person name="Sperling S."/>
            <person name="Stupka E."/>
            <person name="Sugiura K."/>
            <person name="Sultana R."/>
            <person name="Takenaka Y."/>
            <person name="Taki K."/>
            <person name="Tammoja K."/>
            <person name="Tan S.L."/>
            <person name="Tang S."/>
            <person name="Taylor M.S."/>
            <person name="Tegner J."/>
            <person name="Teichmann S.A."/>
            <person name="Ueda H.R."/>
            <person name="van Nimwegen E."/>
            <person name="Verardo R."/>
            <person name="Wei C.L."/>
            <person name="Yagi K."/>
            <person name="Yamanishi H."/>
            <person name="Zabarovsky E."/>
            <person name="Zhu S."/>
            <person name="Zimmer A."/>
            <person name="Hide W."/>
            <person name="Bult C."/>
            <person name="Grimmond S.M."/>
            <person name="Teasdale R.D."/>
            <person name="Liu E.T."/>
            <person name="Brusic V."/>
            <person name="Quackenbush J."/>
            <person name="Wahlestedt C."/>
            <person name="Mattick J.S."/>
            <person name="Hume D.A."/>
            <person name="Kai C."/>
            <person name="Sasaki D."/>
            <person name="Tomaru Y."/>
            <person name="Fukuda S."/>
            <person name="Kanamori-Katayama M."/>
            <person name="Suzuki M."/>
            <person name="Aoki J."/>
            <person name="Arakawa T."/>
            <person name="Iida J."/>
            <person name="Imamura K."/>
            <person name="Itoh M."/>
            <person name="Kato T."/>
            <person name="Kawaji H."/>
            <person name="Kawagashira N."/>
            <person name="Kawashima T."/>
            <person name="Kojima M."/>
            <person name="Kondo S."/>
            <person name="Konno H."/>
            <person name="Nakano K."/>
            <person name="Ninomiya N."/>
            <person name="Nishio T."/>
            <person name="Okada M."/>
            <person name="Plessy C."/>
            <person name="Shibata K."/>
            <person name="Shiraki T."/>
            <person name="Suzuki S."/>
            <person name="Tagami M."/>
            <person name="Waki K."/>
            <person name="Watahiki A."/>
            <person name="Okamura-Oho Y."/>
            <person name="Suzuki H."/>
            <person name="Kawai J."/>
            <person name="Hayashizaki Y."/>
        </authorList>
    </citation>
    <scope>NUCLEOTIDE SEQUENCE [LARGE SCALE MRNA]</scope>
    <source>
        <strain>C57BL/6J</strain>
        <tissue>Testis</tissue>
    </source>
</reference>
<reference key="3">
    <citation type="journal article" date="2004" name="Genome Res.">
        <title>The status, quality, and expansion of the NIH full-length cDNA project: the Mammalian Gene Collection (MGC).</title>
        <authorList>
            <consortium name="The MGC Project Team"/>
        </authorList>
    </citation>
    <scope>NUCLEOTIDE SEQUENCE [LARGE SCALE MRNA]</scope>
    <source>
        <tissue>Testis</tissue>
    </source>
</reference>
<gene>
    <name type="primary">Lmntd1</name>
    <name type="synonym">Ifltd1</name>
    <name type="synonym">Lmna-rs1</name>
</gene>
<protein>
    <recommendedName>
        <fullName>Lamin tail domain-containing protein 1</fullName>
    </recommendedName>
    <alternativeName>
        <fullName>Intermediate filament tail domain-containing protein 1</fullName>
    </alternativeName>
    <alternativeName>
        <fullName>Lamin-A-related sequence 1 protein</fullName>
    </alternativeName>
</protein>
<organism>
    <name type="scientific">Mus musculus</name>
    <name type="common">Mouse</name>
    <dbReference type="NCBI Taxonomy" id="10090"/>
    <lineage>
        <taxon>Eukaryota</taxon>
        <taxon>Metazoa</taxon>
        <taxon>Chordata</taxon>
        <taxon>Craniata</taxon>
        <taxon>Vertebrata</taxon>
        <taxon>Euteleostomi</taxon>
        <taxon>Mammalia</taxon>
        <taxon>Eutheria</taxon>
        <taxon>Euarchontoglires</taxon>
        <taxon>Glires</taxon>
        <taxon>Rodentia</taxon>
        <taxon>Myomorpha</taxon>
        <taxon>Muroidea</taxon>
        <taxon>Muridae</taxon>
        <taxon>Murinae</taxon>
        <taxon>Mus</taxon>
        <taxon>Mus</taxon>
    </lineage>
</organism>